<keyword id="KW-0349">Heme</keyword>
<keyword id="KW-0408">Iron</keyword>
<keyword id="KW-0456">Lyase</keyword>
<keyword id="KW-0479">Metal-binding</keyword>
<keyword id="KW-0560">Oxidoreductase</keyword>
<keyword id="KW-0574">Periplasm</keyword>
<keyword id="KW-0575">Peroxidase</keyword>
<keyword id="KW-1185">Reference proteome</keyword>
<keyword id="KW-0732">Signal</keyword>
<comment type="function">
    <text evidence="2">Involved in the recovery of exogenous heme iron. Extracts iron from heme while preserving the protoporphyrin ring intact.</text>
</comment>
<comment type="catalytic activity">
    <reaction evidence="2">
        <text>heme b + 2 H(+) = protoporphyrin IX + Fe(2+)</text>
        <dbReference type="Rhea" id="RHEA:22584"/>
        <dbReference type="ChEBI" id="CHEBI:15378"/>
        <dbReference type="ChEBI" id="CHEBI:29033"/>
        <dbReference type="ChEBI" id="CHEBI:57306"/>
        <dbReference type="ChEBI" id="CHEBI:60344"/>
        <dbReference type="EC" id="4.98.1.1"/>
    </reaction>
    <physiologicalReaction direction="left-to-right" evidence="2">
        <dbReference type="Rhea" id="RHEA:22585"/>
    </physiologicalReaction>
</comment>
<comment type="cofactor">
    <cofactor evidence="1">
        <name>heme b</name>
        <dbReference type="ChEBI" id="CHEBI:60344"/>
    </cofactor>
    <text evidence="1">Binds 1 heme b (iron(II)-protoporphyrin IX) group non-covalently per subunit.</text>
</comment>
<comment type="subunit">
    <text evidence="1">Homodimer. Part of a ferrous iron transporter composed of EfeU, EfeO and EfeB (By similarity).</text>
</comment>
<comment type="subcellular location">
    <subcellularLocation>
        <location evidence="1">Periplasm</location>
    </subcellularLocation>
</comment>
<comment type="PTM">
    <text>Predicted to be exported by the Tat system. The position of the signal peptide cleavage has not been experimentally proven.</text>
</comment>
<comment type="similarity">
    <text evidence="4">Belongs to the DyP-type peroxidase family. EfeB subfamily.</text>
</comment>
<protein>
    <recommendedName>
        <fullName>Deferrochelatase</fullName>
        <ecNumber evidence="2">4.98.1.1</ecNumber>
    </recommendedName>
    <alternativeName>
        <fullName>Peroxidase EfeB</fullName>
        <ecNumber evidence="2">1.11.1.-</ecNumber>
    </alternativeName>
</protein>
<name>EFEB_YERPE</name>
<dbReference type="EC" id="4.98.1.1" evidence="2"/>
<dbReference type="EC" id="1.11.1.-" evidence="2"/>
<dbReference type="EMBL" id="AL590842">
    <property type="protein sequence ID" value="CAL20496.1"/>
    <property type="molecule type" value="Genomic_DNA"/>
</dbReference>
<dbReference type="EMBL" id="AE009952">
    <property type="protein sequence ID" value="AAM86007.1"/>
    <property type="molecule type" value="Genomic_DNA"/>
</dbReference>
<dbReference type="EMBL" id="AE017042">
    <property type="protein sequence ID" value="AAS61772.1"/>
    <property type="molecule type" value="Genomic_DNA"/>
</dbReference>
<dbReference type="PIR" id="AE0226">
    <property type="entry name" value="AE0226"/>
</dbReference>
<dbReference type="RefSeq" id="WP_002211167.1">
    <property type="nucleotide sequence ID" value="NZ_WUCM01000005.1"/>
</dbReference>
<dbReference type="RefSeq" id="YP_002346850.1">
    <property type="nucleotide sequence ID" value="NC_003143.1"/>
</dbReference>
<dbReference type="SMR" id="Q7CI09"/>
<dbReference type="STRING" id="214092.YPO1856"/>
<dbReference type="PeroxiBase" id="5876">
    <property type="entry name" value="YpDyPrx01"/>
</dbReference>
<dbReference type="PaxDb" id="214092-YPO1856"/>
<dbReference type="EnsemblBacteria" id="AAS61772">
    <property type="protein sequence ID" value="AAS61772"/>
    <property type="gene ID" value="YP_1537"/>
</dbReference>
<dbReference type="GeneID" id="57976725"/>
<dbReference type="KEGG" id="ype:YPO1856"/>
<dbReference type="KEGG" id="ypk:y2450"/>
<dbReference type="KEGG" id="ypm:YP_1537"/>
<dbReference type="PATRIC" id="fig|1028802.3.peg.27"/>
<dbReference type="eggNOG" id="COG2837">
    <property type="taxonomic scope" value="Bacteria"/>
</dbReference>
<dbReference type="HOGENOM" id="CLU_039488_0_0_6"/>
<dbReference type="OMA" id="QACANDP"/>
<dbReference type="OrthoDB" id="9781066at2"/>
<dbReference type="Proteomes" id="UP000000815">
    <property type="component" value="Chromosome"/>
</dbReference>
<dbReference type="Proteomes" id="UP000001019">
    <property type="component" value="Chromosome"/>
</dbReference>
<dbReference type="Proteomes" id="UP000002490">
    <property type="component" value="Chromosome"/>
</dbReference>
<dbReference type="GO" id="GO:0005829">
    <property type="term" value="C:cytosol"/>
    <property type="evidence" value="ECO:0000318"/>
    <property type="project" value="GO_Central"/>
</dbReference>
<dbReference type="GO" id="GO:0042597">
    <property type="term" value="C:periplasmic space"/>
    <property type="evidence" value="ECO:0007669"/>
    <property type="project" value="UniProtKB-SubCell"/>
</dbReference>
<dbReference type="GO" id="GO:0004325">
    <property type="term" value="F:ferrochelatase activity"/>
    <property type="evidence" value="ECO:0007669"/>
    <property type="project" value="RHEA"/>
</dbReference>
<dbReference type="GO" id="GO:0020037">
    <property type="term" value="F:heme binding"/>
    <property type="evidence" value="ECO:0000318"/>
    <property type="project" value="GO_Central"/>
</dbReference>
<dbReference type="GO" id="GO:0046872">
    <property type="term" value="F:metal ion binding"/>
    <property type="evidence" value="ECO:0007669"/>
    <property type="project" value="UniProtKB-KW"/>
</dbReference>
<dbReference type="GO" id="GO:0004601">
    <property type="term" value="F:peroxidase activity"/>
    <property type="evidence" value="ECO:0000318"/>
    <property type="project" value="GO_Central"/>
</dbReference>
<dbReference type="GO" id="GO:0033212">
    <property type="term" value="P:iron import into cell"/>
    <property type="evidence" value="ECO:0007669"/>
    <property type="project" value="InterPro"/>
</dbReference>
<dbReference type="InterPro" id="IPR011008">
    <property type="entry name" value="Dimeric_a/b-barrel"/>
</dbReference>
<dbReference type="InterPro" id="IPR048328">
    <property type="entry name" value="Dyp_perox_C"/>
</dbReference>
<dbReference type="InterPro" id="IPR048327">
    <property type="entry name" value="Dyp_perox_N"/>
</dbReference>
<dbReference type="InterPro" id="IPR006314">
    <property type="entry name" value="Dyp_peroxidase"/>
</dbReference>
<dbReference type="InterPro" id="IPR006313">
    <property type="entry name" value="EfeB/EfeN"/>
</dbReference>
<dbReference type="InterPro" id="IPR006311">
    <property type="entry name" value="TAT_signal"/>
</dbReference>
<dbReference type="NCBIfam" id="TIGR01413">
    <property type="entry name" value="Dyp_perox_fam"/>
    <property type="match status" value="1"/>
</dbReference>
<dbReference type="NCBIfam" id="TIGR01412">
    <property type="entry name" value="tat_substr_1"/>
    <property type="match status" value="1"/>
</dbReference>
<dbReference type="PANTHER" id="PTHR30521:SF4">
    <property type="entry name" value="DEFERROCHELATASE"/>
    <property type="match status" value="1"/>
</dbReference>
<dbReference type="PANTHER" id="PTHR30521">
    <property type="entry name" value="DEFERROCHELATASE/PEROXIDASE"/>
    <property type="match status" value="1"/>
</dbReference>
<dbReference type="Pfam" id="PF20628">
    <property type="entry name" value="Dyp_perox_C"/>
    <property type="match status" value="1"/>
</dbReference>
<dbReference type="Pfam" id="PF04261">
    <property type="entry name" value="Dyp_perox_N"/>
    <property type="match status" value="1"/>
</dbReference>
<dbReference type="SUPFAM" id="SSF54909">
    <property type="entry name" value="Dimeric alpha+beta barrel"/>
    <property type="match status" value="1"/>
</dbReference>
<dbReference type="PROSITE" id="PS51404">
    <property type="entry name" value="DYP_PEROXIDASE"/>
    <property type="match status" value="1"/>
</dbReference>
<dbReference type="PROSITE" id="PS51318">
    <property type="entry name" value="TAT"/>
    <property type="match status" value="1"/>
</dbReference>
<gene>
    <name type="primary">efeB</name>
    <name type="ordered locus">YPO1856</name>
    <name type="ordered locus">y2450</name>
    <name type="ordered locus">YP_1537</name>
</gene>
<feature type="signal peptide" description="Tat-type signal" evidence="3">
    <location>
        <begin position="1"/>
        <end position="45"/>
    </location>
</feature>
<feature type="chain" id="PRO_0000278551" description="Deferrochelatase">
    <location>
        <begin position="46"/>
        <end position="434"/>
    </location>
</feature>
<feature type="binding site" evidence="2">
    <location>
        <begin position="247"/>
        <end position="249"/>
    </location>
    <ligand>
        <name>heme b</name>
        <dbReference type="ChEBI" id="CHEBI:60344"/>
    </ligand>
</feature>
<feature type="binding site" description="proximal binding residue" evidence="2">
    <location>
        <position position="340"/>
    </location>
    <ligand>
        <name>heme b</name>
        <dbReference type="ChEBI" id="CHEBI:60344"/>
    </ligand>
    <ligandPart>
        <name>Fe</name>
        <dbReference type="ChEBI" id="CHEBI:18248"/>
    </ligandPart>
</feature>
<feature type="binding site" evidence="2">
    <location>
        <begin position="345"/>
        <end position="347"/>
    </location>
    <ligand>
        <name>heme b</name>
        <dbReference type="ChEBI" id="CHEBI:60344"/>
    </ligand>
</feature>
<feature type="binding site" evidence="2">
    <location>
        <position position="358"/>
    </location>
    <ligand>
        <name>heme b</name>
        <dbReference type="ChEBI" id="CHEBI:60344"/>
    </ligand>
</feature>
<reference key="1">
    <citation type="journal article" date="2001" name="Nature">
        <title>Genome sequence of Yersinia pestis, the causative agent of plague.</title>
        <authorList>
            <person name="Parkhill J."/>
            <person name="Wren B.W."/>
            <person name="Thomson N.R."/>
            <person name="Titball R.W."/>
            <person name="Holden M.T.G."/>
            <person name="Prentice M.B."/>
            <person name="Sebaihia M."/>
            <person name="James K.D."/>
            <person name="Churcher C.M."/>
            <person name="Mungall K.L."/>
            <person name="Baker S."/>
            <person name="Basham D."/>
            <person name="Bentley S.D."/>
            <person name="Brooks K."/>
            <person name="Cerdeno-Tarraga A.-M."/>
            <person name="Chillingworth T."/>
            <person name="Cronin A."/>
            <person name="Davies R.M."/>
            <person name="Davis P."/>
            <person name="Dougan G."/>
            <person name="Feltwell T."/>
            <person name="Hamlin N."/>
            <person name="Holroyd S."/>
            <person name="Jagels K."/>
            <person name="Karlyshev A.V."/>
            <person name="Leather S."/>
            <person name="Moule S."/>
            <person name="Oyston P.C.F."/>
            <person name="Quail M.A."/>
            <person name="Rutherford K.M."/>
            <person name="Simmonds M."/>
            <person name="Skelton J."/>
            <person name="Stevens K."/>
            <person name="Whitehead S."/>
            <person name="Barrell B.G."/>
        </authorList>
    </citation>
    <scope>NUCLEOTIDE SEQUENCE [LARGE SCALE GENOMIC DNA]</scope>
    <source>
        <strain>CO-92 / Biovar Orientalis</strain>
    </source>
</reference>
<reference key="2">
    <citation type="journal article" date="2002" name="J. Bacteriol.">
        <title>Genome sequence of Yersinia pestis KIM.</title>
        <authorList>
            <person name="Deng W."/>
            <person name="Burland V."/>
            <person name="Plunkett G. III"/>
            <person name="Boutin A."/>
            <person name="Mayhew G.F."/>
            <person name="Liss P."/>
            <person name="Perna N.T."/>
            <person name="Rose D.J."/>
            <person name="Mau B."/>
            <person name="Zhou S."/>
            <person name="Schwartz D.C."/>
            <person name="Fetherston J.D."/>
            <person name="Lindler L.E."/>
            <person name="Brubaker R.R."/>
            <person name="Plano G.V."/>
            <person name="Straley S.C."/>
            <person name="McDonough K.A."/>
            <person name="Nilles M.L."/>
            <person name="Matson J.S."/>
            <person name="Blattner F.R."/>
            <person name="Perry R.D."/>
        </authorList>
    </citation>
    <scope>NUCLEOTIDE SEQUENCE [LARGE SCALE GENOMIC DNA]</scope>
    <source>
        <strain>KIM10+ / Biovar Mediaevalis</strain>
    </source>
</reference>
<reference key="3">
    <citation type="journal article" date="2004" name="DNA Res.">
        <title>Complete genome sequence of Yersinia pestis strain 91001, an isolate avirulent to humans.</title>
        <authorList>
            <person name="Song Y."/>
            <person name="Tong Z."/>
            <person name="Wang J."/>
            <person name="Wang L."/>
            <person name="Guo Z."/>
            <person name="Han Y."/>
            <person name="Zhang J."/>
            <person name="Pei D."/>
            <person name="Zhou D."/>
            <person name="Qin H."/>
            <person name="Pang X."/>
            <person name="Han Y."/>
            <person name="Zhai J."/>
            <person name="Li M."/>
            <person name="Cui B."/>
            <person name="Qi Z."/>
            <person name="Jin L."/>
            <person name="Dai R."/>
            <person name="Chen F."/>
            <person name="Li S."/>
            <person name="Ye C."/>
            <person name="Du Z."/>
            <person name="Lin W."/>
            <person name="Wang J."/>
            <person name="Yu J."/>
            <person name="Yang H."/>
            <person name="Wang J."/>
            <person name="Huang P."/>
            <person name="Yang R."/>
        </authorList>
    </citation>
    <scope>NUCLEOTIDE SEQUENCE [LARGE SCALE GENOMIC DNA]</scope>
    <source>
        <strain>91001 / Biovar Mediaevalis</strain>
    </source>
</reference>
<evidence type="ECO:0000250" key="1"/>
<evidence type="ECO:0000250" key="2">
    <source>
        <dbReference type="UniProtKB" id="P31545"/>
    </source>
</evidence>
<evidence type="ECO:0000255" key="3">
    <source>
        <dbReference type="PROSITE-ProRule" id="PRU00648"/>
    </source>
</evidence>
<evidence type="ECO:0000305" key="4"/>
<accession>Q7CI09</accession>
<accession>Q74V02</accession>
<organism>
    <name type="scientific">Yersinia pestis</name>
    <dbReference type="NCBI Taxonomy" id="632"/>
    <lineage>
        <taxon>Bacteria</taxon>
        <taxon>Pseudomonadati</taxon>
        <taxon>Pseudomonadota</taxon>
        <taxon>Gammaproteobacteria</taxon>
        <taxon>Enterobacterales</taxon>
        <taxon>Yersiniaceae</taxon>
        <taxon>Yersinia</taxon>
    </lineage>
</organism>
<proteinExistence type="inferred from homology"/>
<sequence length="434" mass="47801">MRDKTGPKFGPYQPDDEAVSPSRRRLILGMGMVSGALVLGGAKTAQAADCRSPDVAGTQDERWQKQPFYGQHQAGVLTPQQAAMMLVAFDVLATDKTSLIRLFKLLTERLAFLTTGGRAPSVNAKLPPLDSGIMGPEIYPDNLTVTVSVGNALFDERFGLQGQKPLRLQRMTRFPNDSLDAGLCHGDVMLQICANTNETVIHALRDIIKHTPDLLSVRWKREGFISAHAARSKGQDTPINLLGFKDGTANPKISNKPLINNVVWVSNNAGEPAWAVGGSYQVVRIIRFKVEFWDRTPLQEQQTIFGRDKNSGAPLGMQHEHDEPNYAKDPEGKVIPMDAHIRLANPRTIETQRNLMLRRGYSYSLGVSNSGQLDMGLLFVCYQSDLAQAFLTVQERLNGEALEEYVKPIGGGYFFTLPGVADANHYLAQSLLEA</sequence>